<name>COAX_PSEA8</name>
<comment type="function">
    <text evidence="1">Catalyzes the phosphorylation of pantothenate (Pan), the first step in CoA biosynthesis.</text>
</comment>
<comment type="catalytic activity">
    <reaction evidence="1">
        <text>(R)-pantothenate + ATP = (R)-4'-phosphopantothenate + ADP + H(+)</text>
        <dbReference type="Rhea" id="RHEA:16373"/>
        <dbReference type="ChEBI" id="CHEBI:10986"/>
        <dbReference type="ChEBI" id="CHEBI:15378"/>
        <dbReference type="ChEBI" id="CHEBI:29032"/>
        <dbReference type="ChEBI" id="CHEBI:30616"/>
        <dbReference type="ChEBI" id="CHEBI:456216"/>
        <dbReference type="EC" id="2.7.1.33"/>
    </reaction>
</comment>
<comment type="cofactor">
    <cofactor evidence="1">
        <name>NH4(+)</name>
        <dbReference type="ChEBI" id="CHEBI:28938"/>
    </cofactor>
    <cofactor evidence="1">
        <name>K(+)</name>
        <dbReference type="ChEBI" id="CHEBI:29103"/>
    </cofactor>
    <text evidence="1">A monovalent cation. Ammonium or potassium.</text>
</comment>
<comment type="pathway">
    <text evidence="1">Cofactor biosynthesis; coenzyme A biosynthesis; CoA from (R)-pantothenate: step 1/5.</text>
</comment>
<comment type="subunit">
    <text evidence="1">Homodimer.</text>
</comment>
<comment type="subcellular location">
    <subcellularLocation>
        <location evidence="1">Cytoplasm</location>
    </subcellularLocation>
</comment>
<comment type="similarity">
    <text evidence="1">Belongs to the type III pantothenate kinase family.</text>
</comment>
<protein>
    <recommendedName>
        <fullName evidence="1">Type III pantothenate kinase</fullName>
        <ecNumber evidence="1">2.7.1.33</ecNumber>
    </recommendedName>
    <alternativeName>
        <fullName evidence="1">PanK-III</fullName>
    </alternativeName>
    <alternativeName>
        <fullName evidence="1">Pantothenic acid kinase</fullName>
    </alternativeName>
</protein>
<dbReference type="EC" id="2.7.1.33" evidence="1"/>
<dbReference type="EMBL" id="FM209186">
    <property type="protein sequence ID" value="CAW25376.1"/>
    <property type="molecule type" value="Genomic_DNA"/>
</dbReference>
<dbReference type="RefSeq" id="WP_003093768.1">
    <property type="nucleotide sequence ID" value="NC_011770.1"/>
</dbReference>
<dbReference type="SMR" id="B7V628"/>
<dbReference type="KEGG" id="pag:PLES_06491"/>
<dbReference type="HOGENOM" id="CLU_066627_0_1_6"/>
<dbReference type="UniPathway" id="UPA00241">
    <property type="reaction ID" value="UER00352"/>
</dbReference>
<dbReference type="GO" id="GO:0005737">
    <property type="term" value="C:cytoplasm"/>
    <property type="evidence" value="ECO:0007669"/>
    <property type="project" value="UniProtKB-SubCell"/>
</dbReference>
<dbReference type="GO" id="GO:0005524">
    <property type="term" value="F:ATP binding"/>
    <property type="evidence" value="ECO:0007669"/>
    <property type="project" value="UniProtKB-UniRule"/>
</dbReference>
<dbReference type="GO" id="GO:0046872">
    <property type="term" value="F:metal ion binding"/>
    <property type="evidence" value="ECO:0007669"/>
    <property type="project" value="UniProtKB-KW"/>
</dbReference>
<dbReference type="GO" id="GO:0004594">
    <property type="term" value="F:pantothenate kinase activity"/>
    <property type="evidence" value="ECO:0007669"/>
    <property type="project" value="UniProtKB-UniRule"/>
</dbReference>
<dbReference type="GO" id="GO:0015937">
    <property type="term" value="P:coenzyme A biosynthetic process"/>
    <property type="evidence" value="ECO:0007669"/>
    <property type="project" value="UniProtKB-UniRule"/>
</dbReference>
<dbReference type="CDD" id="cd24015">
    <property type="entry name" value="ASKHA_NBD_PanK-III"/>
    <property type="match status" value="1"/>
</dbReference>
<dbReference type="Gene3D" id="3.30.420.40">
    <property type="match status" value="2"/>
</dbReference>
<dbReference type="HAMAP" id="MF_01274">
    <property type="entry name" value="Pantothen_kinase_3"/>
    <property type="match status" value="1"/>
</dbReference>
<dbReference type="InterPro" id="IPR043129">
    <property type="entry name" value="ATPase_NBD"/>
</dbReference>
<dbReference type="InterPro" id="IPR004619">
    <property type="entry name" value="Type_III_PanK"/>
</dbReference>
<dbReference type="NCBIfam" id="TIGR00671">
    <property type="entry name" value="baf"/>
    <property type="match status" value="1"/>
</dbReference>
<dbReference type="NCBIfam" id="NF009857">
    <property type="entry name" value="PRK13322.1-2"/>
    <property type="match status" value="1"/>
</dbReference>
<dbReference type="NCBIfam" id="NF009859">
    <property type="entry name" value="PRK13322.1-4"/>
    <property type="match status" value="1"/>
</dbReference>
<dbReference type="PANTHER" id="PTHR34265">
    <property type="entry name" value="TYPE III PANTOTHENATE KINASE"/>
    <property type="match status" value="1"/>
</dbReference>
<dbReference type="PANTHER" id="PTHR34265:SF1">
    <property type="entry name" value="TYPE III PANTOTHENATE KINASE"/>
    <property type="match status" value="1"/>
</dbReference>
<dbReference type="Pfam" id="PF03309">
    <property type="entry name" value="Pan_kinase"/>
    <property type="match status" value="1"/>
</dbReference>
<dbReference type="SUPFAM" id="SSF53067">
    <property type="entry name" value="Actin-like ATPase domain"/>
    <property type="match status" value="2"/>
</dbReference>
<reference key="1">
    <citation type="journal article" date="2009" name="Genome Res.">
        <title>Newly introduced genomic prophage islands are critical determinants of in vivo competitiveness in the Liverpool epidemic strain of Pseudomonas aeruginosa.</title>
        <authorList>
            <person name="Winstanley C."/>
            <person name="Langille M.G.I."/>
            <person name="Fothergill J.L."/>
            <person name="Kukavica-Ibrulj I."/>
            <person name="Paradis-Bleau C."/>
            <person name="Sanschagrin F."/>
            <person name="Thomson N.R."/>
            <person name="Winsor G.L."/>
            <person name="Quail M.A."/>
            <person name="Lennard N."/>
            <person name="Bignell A."/>
            <person name="Clarke L."/>
            <person name="Seeger K."/>
            <person name="Saunders D."/>
            <person name="Harris D."/>
            <person name="Parkhill J."/>
            <person name="Hancock R.E.W."/>
            <person name="Brinkman F.S.L."/>
            <person name="Levesque R.C."/>
        </authorList>
    </citation>
    <scope>NUCLEOTIDE SEQUENCE [LARGE SCALE GENOMIC DNA]</scope>
    <source>
        <strain>LESB58</strain>
    </source>
</reference>
<evidence type="ECO:0000255" key="1">
    <source>
        <dbReference type="HAMAP-Rule" id="MF_01274"/>
    </source>
</evidence>
<gene>
    <name evidence="1" type="primary">coaX</name>
    <name type="ordered locus">PLES_06491</name>
</gene>
<sequence length="248" mass="26758">MILELDCGNSLIKWRVIEGAARSVAGGLAESDDALVEQLTSQQALPVRACRLVSVRSEQETSQLVARLEQLFPVSALVASSGKQLAGVRNGYLDYQRLGLDRWLALVAAHHLAKKACLVIDLGTAVTSDLVAADGVHLGGYICPGMTLMRSQLRTHTRRIRYDDAEARRALASLQPGQATAEAVERGCLLMLRGFVREQYAMACELLGPDCEIFLTGGDAELVRDELAGARIMPDLVFVGLALACPIE</sequence>
<proteinExistence type="inferred from homology"/>
<accession>B7V628</accession>
<keyword id="KW-0067">ATP-binding</keyword>
<keyword id="KW-0173">Coenzyme A biosynthesis</keyword>
<keyword id="KW-0963">Cytoplasm</keyword>
<keyword id="KW-0418">Kinase</keyword>
<keyword id="KW-0479">Metal-binding</keyword>
<keyword id="KW-0547">Nucleotide-binding</keyword>
<keyword id="KW-0630">Potassium</keyword>
<keyword id="KW-0808">Transferase</keyword>
<feature type="chain" id="PRO_1000140253" description="Type III pantothenate kinase">
    <location>
        <begin position="1"/>
        <end position="248"/>
    </location>
</feature>
<feature type="active site" description="Proton acceptor" evidence="1">
    <location>
        <position position="101"/>
    </location>
</feature>
<feature type="binding site" evidence="1">
    <location>
        <begin position="6"/>
        <end position="13"/>
    </location>
    <ligand>
        <name>ATP</name>
        <dbReference type="ChEBI" id="CHEBI:30616"/>
    </ligand>
</feature>
<feature type="binding site" evidence="1">
    <location>
        <position position="92"/>
    </location>
    <ligand>
        <name>substrate</name>
    </ligand>
</feature>
<feature type="binding site" evidence="1">
    <location>
        <begin position="99"/>
        <end position="102"/>
    </location>
    <ligand>
        <name>substrate</name>
    </ligand>
</feature>
<feature type="binding site" evidence="1">
    <location>
        <position position="121"/>
    </location>
    <ligand>
        <name>K(+)</name>
        <dbReference type="ChEBI" id="CHEBI:29103"/>
    </ligand>
</feature>
<feature type="binding site" evidence="1">
    <location>
        <position position="124"/>
    </location>
    <ligand>
        <name>ATP</name>
        <dbReference type="ChEBI" id="CHEBI:30616"/>
    </ligand>
</feature>
<feature type="binding site" evidence="1">
    <location>
        <position position="180"/>
    </location>
    <ligand>
        <name>substrate</name>
    </ligand>
</feature>
<organism>
    <name type="scientific">Pseudomonas aeruginosa (strain LESB58)</name>
    <dbReference type="NCBI Taxonomy" id="557722"/>
    <lineage>
        <taxon>Bacteria</taxon>
        <taxon>Pseudomonadati</taxon>
        <taxon>Pseudomonadota</taxon>
        <taxon>Gammaproteobacteria</taxon>
        <taxon>Pseudomonadales</taxon>
        <taxon>Pseudomonadaceae</taxon>
        <taxon>Pseudomonas</taxon>
    </lineage>
</organism>